<accession>C6DE79</accession>
<feature type="chain" id="PRO_1000213838" description="Alanine racemase">
    <location>
        <begin position="1"/>
        <end position="360"/>
    </location>
</feature>
<feature type="active site" description="Proton acceptor; specific for D-alanine" evidence="1">
    <location>
        <position position="34"/>
    </location>
</feature>
<feature type="active site" description="Proton acceptor; specific for L-alanine" evidence="1">
    <location>
        <position position="254"/>
    </location>
</feature>
<feature type="binding site" evidence="1">
    <location>
        <position position="129"/>
    </location>
    <ligand>
        <name>substrate</name>
    </ligand>
</feature>
<feature type="binding site" evidence="1">
    <location>
        <position position="302"/>
    </location>
    <ligand>
        <name>substrate</name>
    </ligand>
</feature>
<feature type="modified residue" description="N6-(pyridoxal phosphate)lysine" evidence="1">
    <location>
        <position position="34"/>
    </location>
</feature>
<reference key="1">
    <citation type="submission" date="2009-07" db="EMBL/GenBank/DDBJ databases">
        <title>Complete sequence of Pectobacterium carotovorum subsp. carotovorum PC1.</title>
        <authorList>
            <consortium name="US DOE Joint Genome Institute"/>
            <person name="Lucas S."/>
            <person name="Copeland A."/>
            <person name="Lapidus A."/>
            <person name="Glavina del Rio T."/>
            <person name="Tice H."/>
            <person name="Bruce D."/>
            <person name="Goodwin L."/>
            <person name="Pitluck S."/>
            <person name="Munk A.C."/>
            <person name="Brettin T."/>
            <person name="Detter J.C."/>
            <person name="Han C."/>
            <person name="Tapia R."/>
            <person name="Larimer F."/>
            <person name="Land M."/>
            <person name="Hauser L."/>
            <person name="Kyrpides N."/>
            <person name="Mikhailova N."/>
            <person name="Balakrishnan V."/>
            <person name="Glasner J."/>
            <person name="Perna N.T."/>
        </authorList>
    </citation>
    <scope>NUCLEOTIDE SEQUENCE [LARGE SCALE GENOMIC DNA]</scope>
    <source>
        <strain>PC1</strain>
    </source>
</reference>
<name>ALR_PECCP</name>
<comment type="function">
    <text evidence="1">Catalyzes the interconversion of L-alanine and D-alanine. May also act on other amino acids.</text>
</comment>
<comment type="catalytic activity">
    <reaction evidence="1">
        <text>L-alanine = D-alanine</text>
        <dbReference type="Rhea" id="RHEA:20249"/>
        <dbReference type="ChEBI" id="CHEBI:57416"/>
        <dbReference type="ChEBI" id="CHEBI:57972"/>
        <dbReference type="EC" id="5.1.1.1"/>
    </reaction>
</comment>
<comment type="cofactor">
    <cofactor evidence="1">
        <name>pyridoxal 5'-phosphate</name>
        <dbReference type="ChEBI" id="CHEBI:597326"/>
    </cofactor>
</comment>
<comment type="pathway">
    <text evidence="1">Amino-acid biosynthesis; D-alanine biosynthesis; D-alanine from L-alanine: step 1/1.</text>
</comment>
<comment type="similarity">
    <text evidence="1">Belongs to the alanine racemase family.</text>
</comment>
<proteinExistence type="inferred from homology"/>
<dbReference type="EC" id="5.1.1.1" evidence="1"/>
<dbReference type="EMBL" id="CP001657">
    <property type="protein sequence ID" value="ACT14515.1"/>
    <property type="molecule type" value="Genomic_DNA"/>
</dbReference>
<dbReference type="RefSeq" id="WP_015841637.1">
    <property type="nucleotide sequence ID" value="NC_012917.1"/>
</dbReference>
<dbReference type="SMR" id="C6DE79"/>
<dbReference type="STRING" id="561230.PC1_3499"/>
<dbReference type="KEGG" id="pct:PC1_3499"/>
<dbReference type="eggNOG" id="COG0787">
    <property type="taxonomic scope" value="Bacteria"/>
</dbReference>
<dbReference type="HOGENOM" id="CLU_028393_1_0_6"/>
<dbReference type="OrthoDB" id="9813814at2"/>
<dbReference type="UniPathway" id="UPA00042">
    <property type="reaction ID" value="UER00497"/>
</dbReference>
<dbReference type="Proteomes" id="UP000002736">
    <property type="component" value="Chromosome"/>
</dbReference>
<dbReference type="GO" id="GO:0005829">
    <property type="term" value="C:cytosol"/>
    <property type="evidence" value="ECO:0007669"/>
    <property type="project" value="TreeGrafter"/>
</dbReference>
<dbReference type="GO" id="GO:0008784">
    <property type="term" value="F:alanine racemase activity"/>
    <property type="evidence" value="ECO:0007669"/>
    <property type="project" value="UniProtKB-UniRule"/>
</dbReference>
<dbReference type="GO" id="GO:0030170">
    <property type="term" value="F:pyridoxal phosphate binding"/>
    <property type="evidence" value="ECO:0007669"/>
    <property type="project" value="UniProtKB-UniRule"/>
</dbReference>
<dbReference type="GO" id="GO:0030632">
    <property type="term" value="P:D-alanine biosynthetic process"/>
    <property type="evidence" value="ECO:0007669"/>
    <property type="project" value="UniProtKB-UniRule"/>
</dbReference>
<dbReference type="CDD" id="cd06827">
    <property type="entry name" value="PLPDE_III_AR_proteobact"/>
    <property type="match status" value="1"/>
</dbReference>
<dbReference type="FunFam" id="2.40.37.10:FF:000002">
    <property type="entry name" value="Alanine racemase"/>
    <property type="match status" value="1"/>
</dbReference>
<dbReference type="FunFam" id="3.20.20.10:FF:000002">
    <property type="entry name" value="Alanine racemase"/>
    <property type="match status" value="1"/>
</dbReference>
<dbReference type="Gene3D" id="3.20.20.10">
    <property type="entry name" value="Alanine racemase"/>
    <property type="match status" value="1"/>
</dbReference>
<dbReference type="Gene3D" id="2.40.37.10">
    <property type="entry name" value="Lyase, Ornithine Decarboxylase, Chain A, domain 1"/>
    <property type="match status" value="1"/>
</dbReference>
<dbReference type="HAMAP" id="MF_01201">
    <property type="entry name" value="Ala_racemase"/>
    <property type="match status" value="1"/>
</dbReference>
<dbReference type="InterPro" id="IPR000821">
    <property type="entry name" value="Ala_racemase"/>
</dbReference>
<dbReference type="InterPro" id="IPR009006">
    <property type="entry name" value="Ala_racemase/Decarboxylase_C"/>
</dbReference>
<dbReference type="InterPro" id="IPR011079">
    <property type="entry name" value="Ala_racemase_C"/>
</dbReference>
<dbReference type="InterPro" id="IPR001608">
    <property type="entry name" value="Ala_racemase_N"/>
</dbReference>
<dbReference type="InterPro" id="IPR020622">
    <property type="entry name" value="Ala_racemase_pyridoxalP-BS"/>
</dbReference>
<dbReference type="InterPro" id="IPR029066">
    <property type="entry name" value="PLP-binding_barrel"/>
</dbReference>
<dbReference type="NCBIfam" id="TIGR00492">
    <property type="entry name" value="alr"/>
    <property type="match status" value="1"/>
</dbReference>
<dbReference type="PANTHER" id="PTHR30511">
    <property type="entry name" value="ALANINE RACEMASE"/>
    <property type="match status" value="1"/>
</dbReference>
<dbReference type="PANTHER" id="PTHR30511:SF4">
    <property type="entry name" value="ALANINE RACEMASE, BIOSYNTHETIC"/>
    <property type="match status" value="1"/>
</dbReference>
<dbReference type="Pfam" id="PF00842">
    <property type="entry name" value="Ala_racemase_C"/>
    <property type="match status" value="1"/>
</dbReference>
<dbReference type="Pfam" id="PF01168">
    <property type="entry name" value="Ala_racemase_N"/>
    <property type="match status" value="1"/>
</dbReference>
<dbReference type="PRINTS" id="PR00992">
    <property type="entry name" value="ALARACEMASE"/>
</dbReference>
<dbReference type="SMART" id="SM01005">
    <property type="entry name" value="Ala_racemase_C"/>
    <property type="match status" value="1"/>
</dbReference>
<dbReference type="SUPFAM" id="SSF50621">
    <property type="entry name" value="Alanine racemase C-terminal domain-like"/>
    <property type="match status" value="1"/>
</dbReference>
<dbReference type="SUPFAM" id="SSF51419">
    <property type="entry name" value="PLP-binding barrel"/>
    <property type="match status" value="1"/>
</dbReference>
<dbReference type="PROSITE" id="PS00395">
    <property type="entry name" value="ALANINE_RACEMASE"/>
    <property type="match status" value="1"/>
</dbReference>
<gene>
    <name type="primary">alr</name>
    <name type="ordered locus">PC1_3499</name>
</gene>
<protein>
    <recommendedName>
        <fullName evidence="1">Alanine racemase</fullName>
        <ecNumber evidence="1">5.1.1.1</ecNumber>
    </recommendedName>
</protein>
<keyword id="KW-0413">Isomerase</keyword>
<keyword id="KW-0663">Pyridoxal phosphate</keyword>
<sequence>MKTATAVINRRALRHNLQRIRQLAPDSQVVAIVKANAYGHGMIEAAHTFCDADCYGVARLSEALALRAAGITKPIVLLEGFFSADDLPLLVEHQLETAVHSPEQLAALEQATLSQPLRVWMKLDTGMHRLGVLPEHADAFWQRLTACRNVVQPVNIMSHFSRADEPEAGTTERQLTCFDAFTQGKPGAQSIAASGGILLWPQSHRDRVRPGIILYGVSPLDNEDAAHFGFQPAMTFTSHLIAVREHHTGEAVGYGGTWTSPRNTRLGVVAVGYGDGYPRCAPAGTPVLINGREVPLSGRVSMDMITVDLGPDAQDKVGDEVILWGPTLPVERIAAHTGASAYELITRLTQRTALEYVDGE</sequence>
<evidence type="ECO:0000255" key="1">
    <source>
        <dbReference type="HAMAP-Rule" id="MF_01201"/>
    </source>
</evidence>
<organism>
    <name type="scientific">Pectobacterium carotovorum subsp. carotovorum (strain PC1)</name>
    <dbReference type="NCBI Taxonomy" id="561230"/>
    <lineage>
        <taxon>Bacteria</taxon>
        <taxon>Pseudomonadati</taxon>
        <taxon>Pseudomonadota</taxon>
        <taxon>Gammaproteobacteria</taxon>
        <taxon>Enterobacterales</taxon>
        <taxon>Pectobacteriaceae</taxon>
        <taxon>Pectobacterium</taxon>
    </lineage>
</organism>